<dbReference type="EMBL" id="CU928164">
    <property type="protein sequence ID" value="CAR19778.1"/>
    <property type="molecule type" value="Genomic_DNA"/>
</dbReference>
<dbReference type="RefSeq" id="WP_000059466.1">
    <property type="nucleotide sequence ID" value="NC_011750.1"/>
</dbReference>
<dbReference type="RefSeq" id="YP_002409565.1">
    <property type="nucleotide sequence ID" value="NC_011750.1"/>
</dbReference>
<dbReference type="SMR" id="B7NKN4"/>
<dbReference type="STRING" id="585057.ECIAI39_3662"/>
<dbReference type="GeneID" id="93778818"/>
<dbReference type="KEGG" id="ect:ECIAI39_3662"/>
<dbReference type="PATRIC" id="fig|585057.6.peg.3795"/>
<dbReference type="HOGENOM" id="CLU_148518_0_0_6"/>
<dbReference type="Proteomes" id="UP000000749">
    <property type="component" value="Chromosome"/>
</dbReference>
<dbReference type="GO" id="GO:0022627">
    <property type="term" value="C:cytosolic small ribosomal subunit"/>
    <property type="evidence" value="ECO:0007669"/>
    <property type="project" value="TreeGrafter"/>
</dbReference>
<dbReference type="GO" id="GO:0019843">
    <property type="term" value="F:rRNA binding"/>
    <property type="evidence" value="ECO:0007669"/>
    <property type="project" value="UniProtKB-UniRule"/>
</dbReference>
<dbReference type="GO" id="GO:0003735">
    <property type="term" value="F:structural constituent of ribosome"/>
    <property type="evidence" value="ECO:0007669"/>
    <property type="project" value="InterPro"/>
</dbReference>
<dbReference type="GO" id="GO:0006412">
    <property type="term" value="P:translation"/>
    <property type="evidence" value="ECO:0007669"/>
    <property type="project" value="UniProtKB-UniRule"/>
</dbReference>
<dbReference type="CDD" id="cd00353">
    <property type="entry name" value="Ribosomal_S15p_S13e"/>
    <property type="match status" value="1"/>
</dbReference>
<dbReference type="FunFam" id="1.10.287.10:FF:000002">
    <property type="entry name" value="30S ribosomal protein S15"/>
    <property type="match status" value="1"/>
</dbReference>
<dbReference type="Gene3D" id="6.10.250.3130">
    <property type="match status" value="1"/>
</dbReference>
<dbReference type="Gene3D" id="1.10.287.10">
    <property type="entry name" value="S15/NS1, RNA-binding"/>
    <property type="match status" value="1"/>
</dbReference>
<dbReference type="HAMAP" id="MF_01343_B">
    <property type="entry name" value="Ribosomal_uS15_B"/>
    <property type="match status" value="1"/>
</dbReference>
<dbReference type="InterPro" id="IPR000589">
    <property type="entry name" value="Ribosomal_uS15"/>
</dbReference>
<dbReference type="InterPro" id="IPR005290">
    <property type="entry name" value="Ribosomal_uS15_bac-type"/>
</dbReference>
<dbReference type="InterPro" id="IPR009068">
    <property type="entry name" value="uS15_NS1_RNA-bd_sf"/>
</dbReference>
<dbReference type="NCBIfam" id="TIGR00952">
    <property type="entry name" value="S15_bact"/>
    <property type="match status" value="1"/>
</dbReference>
<dbReference type="PANTHER" id="PTHR23321">
    <property type="entry name" value="RIBOSOMAL PROTEIN S15, BACTERIAL AND ORGANELLAR"/>
    <property type="match status" value="1"/>
</dbReference>
<dbReference type="PANTHER" id="PTHR23321:SF26">
    <property type="entry name" value="SMALL RIBOSOMAL SUBUNIT PROTEIN US15M"/>
    <property type="match status" value="1"/>
</dbReference>
<dbReference type="Pfam" id="PF00312">
    <property type="entry name" value="Ribosomal_S15"/>
    <property type="match status" value="1"/>
</dbReference>
<dbReference type="SMART" id="SM01387">
    <property type="entry name" value="Ribosomal_S15"/>
    <property type="match status" value="1"/>
</dbReference>
<dbReference type="SUPFAM" id="SSF47060">
    <property type="entry name" value="S15/NS1 RNA-binding domain"/>
    <property type="match status" value="1"/>
</dbReference>
<dbReference type="PROSITE" id="PS00362">
    <property type="entry name" value="RIBOSOMAL_S15"/>
    <property type="match status" value="1"/>
</dbReference>
<feature type="chain" id="PRO_1000143110" description="Small ribosomal subunit protein uS15">
    <location>
        <begin position="1"/>
        <end position="89"/>
    </location>
</feature>
<proteinExistence type="inferred from homology"/>
<protein>
    <recommendedName>
        <fullName evidence="1">Small ribosomal subunit protein uS15</fullName>
    </recommendedName>
    <alternativeName>
        <fullName evidence="2">30S ribosomal protein S15</fullName>
    </alternativeName>
</protein>
<evidence type="ECO:0000255" key="1">
    <source>
        <dbReference type="HAMAP-Rule" id="MF_01343"/>
    </source>
</evidence>
<evidence type="ECO:0000305" key="2"/>
<organism>
    <name type="scientific">Escherichia coli O7:K1 (strain IAI39 / ExPEC)</name>
    <dbReference type="NCBI Taxonomy" id="585057"/>
    <lineage>
        <taxon>Bacteria</taxon>
        <taxon>Pseudomonadati</taxon>
        <taxon>Pseudomonadota</taxon>
        <taxon>Gammaproteobacteria</taxon>
        <taxon>Enterobacterales</taxon>
        <taxon>Enterobacteriaceae</taxon>
        <taxon>Escherichia</taxon>
    </lineage>
</organism>
<accession>B7NKN4</accession>
<reference key="1">
    <citation type="journal article" date="2009" name="PLoS Genet.">
        <title>Organised genome dynamics in the Escherichia coli species results in highly diverse adaptive paths.</title>
        <authorList>
            <person name="Touchon M."/>
            <person name="Hoede C."/>
            <person name="Tenaillon O."/>
            <person name="Barbe V."/>
            <person name="Baeriswyl S."/>
            <person name="Bidet P."/>
            <person name="Bingen E."/>
            <person name="Bonacorsi S."/>
            <person name="Bouchier C."/>
            <person name="Bouvet O."/>
            <person name="Calteau A."/>
            <person name="Chiapello H."/>
            <person name="Clermont O."/>
            <person name="Cruveiller S."/>
            <person name="Danchin A."/>
            <person name="Diard M."/>
            <person name="Dossat C."/>
            <person name="Karoui M.E."/>
            <person name="Frapy E."/>
            <person name="Garry L."/>
            <person name="Ghigo J.M."/>
            <person name="Gilles A.M."/>
            <person name="Johnson J."/>
            <person name="Le Bouguenec C."/>
            <person name="Lescat M."/>
            <person name="Mangenot S."/>
            <person name="Martinez-Jehanne V."/>
            <person name="Matic I."/>
            <person name="Nassif X."/>
            <person name="Oztas S."/>
            <person name="Petit M.A."/>
            <person name="Pichon C."/>
            <person name="Rouy Z."/>
            <person name="Ruf C.S."/>
            <person name="Schneider D."/>
            <person name="Tourret J."/>
            <person name="Vacherie B."/>
            <person name="Vallenet D."/>
            <person name="Medigue C."/>
            <person name="Rocha E.P.C."/>
            <person name="Denamur E."/>
        </authorList>
    </citation>
    <scope>NUCLEOTIDE SEQUENCE [LARGE SCALE GENOMIC DNA]</scope>
    <source>
        <strain>IAI39 / ExPEC</strain>
    </source>
</reference>
<keyword id="KW-0687">Ribonucleoprotein</keyword>
<keyword id="KW-0689">Ribosomal protein</keyword>
<keyword id="KW-0694">RNA-binding</keyword>
<keyword id="KW-0699">rRNA-binding</keyword>
<sequence length="89" mass="10269">MSLSTEATAKIVSEFGRDANDTGSTEVQVALLTAQINHLQGHFAEHKKDHHSRRGLLRMVSQRRKLLDYLKRKDVARYTQLIERLGLRR</sequence>
<gene>
    <name evidence="1" type="primary">rpsO</name>
    <name type="ordered locus">ECIAI39_3662</name>
</gene>
<name>RS15_ECO7I</name>
<comment type="function">
    <text evidence="1">One of the primary rRNA binding proteins, it binds directly to 16S rRNA where it helps nucleate assembly of the platform of the 30S subunit by binding and bridging several RNA helices of the 16S rRNA.</text>
</comment>
<comment type="function">
    <text evidence="1">Forms an intersubunit bridge (bridge B4) with the 23S rRNA of the 50S subunit in the ribosome.</text>
</comment>
<comment type="subunit">
    <text evidence="1">Part of the 30S ribosomal subunit. Forms a bridge to the 50S subunit in the 70S ribosome, contacting the 23S rRNA.</text>
</comment>
<comment type="similarity">
    <text evidence="1">Belongs to the universal ribosomal protein uS15 family.</text>
</comment>